<keyword id="KW-1003">Cell membrane</keyword>
<keyword id="KW-0325">Glycoprotein</keyword>
<keyword id="KW-0472">Membrane</keyword>
<keyword id="KW-1185">Reference proteome</keyword>
<keyword id="KW-0812">Transmembrane</keyword>
<keyword id="KW-1133">Transmembrane helix</keyword>
<keyword id="KW-0813">Transport</keyword>
<protein>
    <recommendedName>
        <fullName evidence="9">MFS-type efflux pump MMF1</fullName>
    </recommendedName>
    <alternativeName>
        <fullName evidence="10">Mannosylerythritol lipids (MELs) biosynthesis cluster protein MMF1</fullName>
    </alternativeName>
</protein>
<proteinExistence type="evidence at protein level"/>
<gene>
    <name evidence="9" type="primary">MMF1</name>
    <name type="ORF">PANT_19d00004</name>
</gene>
<name>MMF1_PSEA3</name>
<accession>M9M5N8</accession>
<feature type="chain" id="PRO_0000449542" description="MFS-type efflux pump MMF1">
    <location>
        <begin position="1"/>
        <end position="542"/>
    </location>
</feature>
<feature type="transmembrane region" description="Helical" evidence="1">
    <location>
        <begin position="24"/>
        <end position="44"/>
    </location>
</feature>
<feature type="transmembrane region" description="Helical" evidence="1">
    <location>
        <begin position="51"/>
        <end position="71"/>
    </location>
</feature>
<feature type="transmembrane region" description="Helical" evidence="1">
    <location>
        <begin position="98"/>
        <end position="118"/>
    </location>
</feature>
<feature type="transmembrane region" description="Helical" evidence="1">
    <location>
        <begin position="124"/>
        <end position="144"/>
    </location>
</feature>
<feature type="transmembrane region" description="Helical" evidence="1">
    <location>
        <begin position="151"/>
        <end position="171"/>
    </location>
</feature>
<feature type="transmembrane region" description="Helical" evidence="1">
    <location>
        <begin position="179"/>
        <end position="199"/>
    </location>
</feature>
<feature type="transmembrane region" description="Helical" evidence="1">
    <location>
        <begin position="215"/>
        <end position="235"/>
    </location>
</feature>
<feature type="transmembrane region" description="Helical" evidence="1">
    <location>
        <begin position="248"/>
        <end position="268"/>
    </location>
</feature>
<feature type="transmembrane region" description="Helical" evidence="1">
    <location>
        <begin position="296"/>
        <end position="316"/>
    </location>
</feature>
<feature type="transmembrane region" description="Helical" evidence="1">
    <location>
        <begin position="326"/>
        <end position="346"/>
    </location>
</feature>
<feature type="transmembrane region" description="Helical" evidence="1">
    <location>
        <begin position="355"/>
        <end position="375"/>
    </location>
</feature>
<feature type="transmembrane region" description="Helical" evidence="1">
    <location>
        <begin position="384"/>
        <end position="404"/>
    </location>
</feature>
<feature type="transmembrane region" description="Helical" evidence="1">
    <location>
        <begin position="419"/>
        <end position="439"/>
    </location>
</feature>
<feature type="transmembrane region" description="Helical" evidence="1">
    <location>
        <begin position="490"/>
        <end position="510"/>
    </location>
</feature>
<feature type="glycosylation site" description="N-linked (GlcNAc...) asparagine" evidence="2">
    <location>
        <position position="285"/>
    </location>
</feature>
<organism>
    <name type="scientific">Pseudozyma antarctica (strain T-34)</name>
    <name type="common">Yeast</name>
    <name type="synonym">Candida antarctica</name>
    <dbReference type="NCBI Taxonomy" id="1151754"/>
    <lineage>
        <taxon>Eukaryota</taxon>
        <taxon>Fungi</taxon>
        <taxon>Dikarya</taxon>
        <taxon>Basidiomycota</taxon>
        <taxon>Ustilaginomycotina</taxon>
        <taxon>Ustilaginomycetes</taxon>
        <taxon>Ustilaginales</taxon>
        <taxon>Ustilaginaceae</taxon>
        <taxon>Moesziomyces</taxon>
    </lineage>
</organism>
<reference key="1">
    <citation type="journal article" date="2013" name="Genome Announc.">
        <title>Genome sequence of the basidiomycetous yeast Pseudozyma antarctica T-34, a producer of the glycolipid biosurfactants mannosylerythritol lipids.</title>
        <authorList>
            <person name="Morita T."/>
            <person name="Koike H."/>
            <person name="Koyama Y."/>
            <person name="Hagiwara H."/>
            <person name="Ito E."/>
            <person name="Fukuoka T."/>
            <person name="Imura T."/>
            <person name="Machida M."/>
            <person name="Kitamoto D."/>
        </authorList>
    </citation>
    <scope>NUCLEOTIDE SEQUENCE [LARGE SCALE GENOMIC DNA]</scope>
    <scope>IDENTIFICATION</scope>
    <scope>FUNCTION</scope>
    <source>
        <strain>T-34</strain>
    </source>
</reference>
<reference key="2">
    <citation type="journal article" date="2002" name="J. Biosci. Bioeng.">
        <title>Functions and potential applications of glycolipid biosurfactants--from energy-saving materials to gene delivery carriers.</title>
        <authorList>
            <person name="Kitamoto D."/>
            <person name="Isoda H."/>
            <person name="Nakahara T."/>
        </authorList>
    </citation>
    <scope>BIOTECHNOLOGY</scope>
</reference>
<reference key="3">
    <citation type="journal article" date="2007" name="Colloids Surf. B Biointerfaces">
        <title>Kinetic studies on the interactions between glycolipid biosurfactant assembled monolayers and various classes of immunoglobulins using surface plasmon resonance.</title>
        <authorList>
            <person name="Ito S."/>
            <person name="Imura T."/>
            <person name="Fukuoka T."/>
            <person name="Morita T."/>
            <person name="Sakai H."/>
            <person name="Abe M."/>
            <person name="Kitamoto D."/>
        </authorList>
    </citation>
    <scope>BIOTECHNOLOGY</scope>
</reference>
<reference key="4">
    <citation type="journal article" date="2007" name="Langmuir">
        <title>Aqueous-phase behavior of natural glycolipid biosurfactant mannosylerythritol lipid A: sponge, cubic, and lamellar phases.</title>
        <authorList>
            <person name="Imura T."/>
            <person name="Hikosaka Y."/>
            <person name="Worakitkanchanakul W."/>
            <person name="Sakai H."/>
            <person name="Abe M."/>
            <person name="Konishi M."/>
            <person name="Minamikawa H."/>
            <person name="Kitamoto D."/>
        </authorList>
    </citation>
    <scope>BIOTECHNOLOGY</scope>
</reference>
<reference key="5">
    <citation type="journal article" date="2009" name="Biotechnol. Appl. Biochem.">
        <title>Production of glycolipid biosurfactants by basidiomycetous yeasts.</title>
        <authorList>
            <person name="Morita T."/>
            <person name="Fukuoka T."/>
            <person name="Imura T."/>
            <person name="Kitamoto D."/>
        </authorList>
    </citation>
    <scope>BIOTECHNOLOGY</scope>
</reference>
<reference key="6">
    <citation type="journal article" date="2009" name="Curr. Opin. Colloid Interface Sci.">
        <title>Self-assembling properties of glycolipid biosurfactants and their potential applications.</title>
        <authorList>
            <person name="Kitamoto D."/>
            <person name="Morita T."/>
            <person name="Fukuoka T."/>
            <person name="Konishi M."/>
            <person name="Imura T."/>
        </authorList>
    </citation>
    <scope>BIOTECHNOLOGY</scope>
</reference>
<reference key="7">
    <citation type="journal article" date="2020" name="PLoS ONE">
        <title>Targeted transcriptomic study of the implication of central metabolic pathways in mannosylerythritol lipids biosynthesis in Pseudozyma antarctica T-34.</title>
        <authorList>
            <person name="Wada K."/>
            <person name="Koike H."/>
            <person name="Fujii T."/>
            <person name="Morita T."/>
        </authorList>
    </citation>
    <scope>FUNCTION</scope>
</reference>
<evidence type="ECO:0000255" key="1"/>
<evidence type="ECO:0000255" key="2">
    <source>
        <dbReference type="PROSITE-ProRule" id="PRU00498"/>
    </source>
</evidence>
<evidence type="ECO:0000269" key="3">
    <source>
    </source>
</evidence>
<evidence type="ECO:0000269" key="4">
    <source>
    </source>
</evidence>
<evidence type="ECO:0000269" key="5">
    <source>
    </source>
</evidence>
<evidence type="ECO:0000269" key="6">
    <source>
    </source>
</evidence>
<evidence type="ECO:0000269" key="7">
    <source>
    </source>
</evidence>
<evidence type="ECO:0000269" key="8">
    <source ref="6"/>
</evidence>
<evidence type="ECO:0000303" key="9">
    <source>
    </source>
</evidence>
<evidence type="ECO:0000303" key="10">
    <source>
    </source>
</evidence>
<evidence type="ECO:0000305" key="11"/>
<evidence type="ECO:0000305" key="12">
    <source>
    </source>
</evidence>
<evidence type="ECO:0000305" key="13">
    <source>
    </source>
</evidence>
<comment type="function">
    <text evidence="7 12">Glycosyltransferase; part of the gene cluster that mediates the biosynthesis of mannosylerythritol lipids (MELs), surface-active substances that enhance the availability of water-insoluble substrates (Probable) (PubMed:31923270). MMF1 is directly involved in the secretiopn of MALs (Probable).</text>
</comment>
<comment type="subcellular location">
    <subcellularLocation>
        <location evidence="13">Cell membrane</location>
        <topology evidence="1">Multi-pass membrane protein</topology>
    </subcellularLocation>
</comment>
<comment type="induction">
    <text evidence="7">Expression is induced when cells are grown in cultures containing vegetable oil as the carbon source.</text>
</comment>
<comment type="biotechnology">
    <text evidence="3 4 5 6 8">MELs not only have high potential as eco-friendly biosurfactants due to their excellent surface activity, but also have attracted considerable recent interest because of thei runique properties, including self-assembly, anti-tumor and cell differentiation induction activities, and moisturizing and hair-repairing properties.</text>
</comment>
<comment type="similarity">
    <text evidence="11">Belongs to the major facilitator superfamily.</text>
</comment>
<dbReference type="EMBL" id="DF196785">
    <property type="protein sequence ID" value="GAC75890.1"/>
    <property type="molecule type" value="Genomic_DNA"/>
</dbReference>
<dbReference type="SMR" id="M9M5N8"/>
<dbReference type="GlyCosmos" id="M9M5N8">
    <property type="glycosylation" value="1 site, No reported glycans"/>
</dbReference>
<dbReference type="OrthoDB" id="9633at5257"/>
<dbReference type="Proteomes" id="UP000011976">
    <property type="component" value="Unassembled WGS sequence"/>
</dbReference>
<dbReference type="GO" id="GO:0005886">
    <property type="term" value="C:plasma membrane"/>
    <property type="evidence" value="ECO:0007669"/>
    <property type="project" value="UniProtKB-SubCell"/>
</dbReference>
<dbReference type="GO" id="GO:0022857">
    <property type="term" value="F:transmembrane transporter activity"/>
    <property type="evidence" value="ECO:0007669"/>
    <property type="project" value="InterPro"/>
</dbReference>
<dbReference type="FunFam" id="1.20.1250.20:FF:000484">
    <property type="entry name" value="MFS general substrate transporter"/>
    <property type="match status" value="1"/>
</dbReference>
<dbReference type="Gene3D" id="1.20.1250.20">
    <property type="entry name" value="MFS general substrate transporter like domains"/>
    <property type="match status" value="1"/>
</dbReference>
<dbReference type="Gene3D" id="1.20.1720.10">
    <property type="entry name" value="Multidrug resistance protein D"/>
    <property type="match status" value="1"/>
</dbReference>
<dbReference type="InterPro" id="IPR011701">
    <property type="entry name" value="MFS"/>
</dbReference>
<dbReference type="InterPro" id="IPR020846">
    <property type="entry name" value="MFS_dom"/>
</dbReference>
<dbReference type="InterPro" id="IPR036259">
    <property type="entry name" value="MFS_trans_sf"/>
</dbReference>
<dbReference type="PANTHER" id="PTHR23501:SF102">
    <property type="entry name" value="DRUG TRANSPORTER, PUTATIVE (AFU_ORTHOLOGUE AFUA_3G08530)-RELATED"/>
    <property type="match status" value="1"/>
</dbReference>
<dbReference type="PANTHER" id="PTHR23501">
    <property type="entry name" value="MAJOR FACILITATOR SUPERFAMILY"/>
    <property type="match status" value="1"/>
</dbReference>
<dbReference type="Pfam" id="PF07690">
    <property type="entry name" value="MFS_1"/>
    <property type="match status" value="1"/>
</dbReference>
<dbReference type="PRINTS" id="PR01036">
    <property type="entry name" value="TCRTETB"/>
</dbReference>
<dbReference type="SUPFAM" id="SSF103473">
    <property type="entry name" value="MFS general substrate transporter"/>
    <property type="match status" value="1"/>
</dbReference>
<dbReference type="PROSITE" id="PS50850">
    <property type="entry name" value="MFS"/>
    <property type="match status" value="1"/>
</dbReference>
<sequence length="542" mass="58464">MDDKIALTSNDGERPRMKKDWRFWTIFAALMLIAFLAALDMTMISTALPAIVAALPPSSIAANWITSAFLLPMVASQPIFGGLSCSLGRKNSVISALVIFLVGSIVCATAKSVLVLVVGRGVQGLGGGGIHALSEIIMSDLTTLRERGVYFGLIALVFAVAGFIAPVLGGVFSHSSWPWIFWINLPIGAVALVLLVLFLNIRVPLLTGRQKWEKLDLVGNAILFGSVTAVLIAVTEGGIKYRWSDARVWVPLVVGLIGLVAFLMVEWIPGPLCRQPVFPRDLFANRTAAVAYLQTFLHGVIFYGIIYMVPIYFQAIKDRTPLQSAIWSFPLTAPSTPLALIAGLLISISGRYKKLIFIGWALMAGGVGWLTHWSVGTSKAEWAISQIIAGAGIGIMFPITLPPIQASLPVERLEAATAAYAFSRTFGAVWGITGATTIFATQAAKKLRPDYGQLEPLGLNDFTVIAFAESLRYLPEQLQVLVKKVYADAISDSFWLFVPLAIIGFASTFLLKDLPLPDFIKSQAVLEEKGASENASPPESLA</sequence>